<gene>
    <name type="primary">aes</name>
</gene>
<feature type="chain" id="PRO_0000050837" description="Amino-terminal enhancer of split">
    <location>
        <begin position="1"/>
        <end position="197"/>
    </location>
</feature>
<feature type="region of interest" description="Disordered" evidence="2">
    <location>
        <begin position="1"/>
        <end position="20"/>
    </location>
</feature>
<feature type="region of interest" description="CCN domain">
    <location>
        <begin position="166"/>
        <end position="197"/>
    </location>
</feature>
<feature type="region of interest" description="Disordered" evidence="2">
    <location>
        <begin position="169"/>
        <end position="197"/>
    </location>
</feature>
<feature type="compositionally biased region" description="Low complexity" evidence="2">
    <location>
        <begin position="1"/>
        <end position="15"/>
    </location>
</feature>
<feature type="compositionally biased region" description="Basic and acidic residues" evidence="2">
    <location>
        <begin position="175"/>
        <end position="197"/>
    </location>
</feature>
<protein>
    <recommendedName>
        <fullName>Amino-terminal enhancer of split</fullName>
        <shortName>Amino enhancer of split</shortName>
    </recommendedName>
    <alternativeName>
        <fullName>Protein GRG</fullName>
    </alternativeName>
</protein>
<comment type="function">
    <text evidence="1">May act as a transcriptional corepressor. Has a possible role in the negative regulation of proteins containing WD-40 repeats. May be required for the initiation and maintenance of the differentiated state (By similarity).</text>
</comment>
<comment type="subunit">
    <text evidence="1">Monomer.</text>
</comment>
<comment type="subcellular location">
    <subcellularLocation>
        <location evidence="1">Nucleus</location>
    </subcellularLocation>
</comment>
<comment type="tissue specificity">
    <text>Predominantly expressed in brain, testis and ovary. Ubiquitously expressed in the developing embryo. Present in unfertilized and fertilized eggs.</text>
</comment>
<comment type="domain">
    <text>Lacks the C-terminal WD repeats.</text>
</comment>
<comment type="PTM">
    <text evidence="1">Ubiquitinated by XIAP/BIRC4.</text>
</comment>
<comment type="similarity">
    <text evidence="3">Belongs to the WD repeat Groucho/TLE family.</text>
</comment>
<dbReference type="EMBL" id="U18776">
    <property type="protein sequence ID" value="AAC60272.1"/>
    <property type="molecule type" value="mRNA"/>
</dbReference>
<dbReference type="SMR" id="O42470"/>
<dbReference type="AGR" id="Xenbase:XB-GENE-868124"/>
<dbReference type="Xenbase" id="XB-GENE-868124">
    <property type="gene designation" value="tle5.S"/>
</dbReference>
<dbReference type="Proteomes" id="UP000186698">
    <property type="component" value="Unplaced"/>
</dbReference>
<dbReference type="GO" id="GO:0005634">
    <property type="term" value="C:nucleus"/>
    <property type="evidence" value="ECO:0007669"/>
    <property type="project" value="UniProtKB-SubCell"/>
</dbReference>
<dbReference type="GO" id="GO:0005667">
    <property type="term" value="C:transcription regulator complex"/>
    <property type="evidence" value="ECO:0007669"/>
    <property type="project" value="TreeGrafter"/>
</dbReference>
<dbReference type="GO" id="GO:0003714">
    <property type="term" value="F:transcription corepressor activity"/>
    <property type="evidence" value="ECO:0007669"/>
    <property type="project" value="TreeGrafter"/>
</dbReference>
<dbReference type="GO" id="GO:0090090">
    <property type="term" value="P:negative regulation of canonical Wnt signaling pathway"/>
    <property type="evidence" value="ECO:0007669"/>
    <property type="project" value="TreeGrafter"/>
</dbReference>
<dbReference type="InterPro" id="IPR005617">
    <property type="entry name" value="Groucho/TLE_N"/>
</dbReference>
<dbReference type="InterPro" id="IPR009146">
    <property type="entry name" value="Groucho_enhance"/>
</dbReference>
<dbReference type="PANTHER" id="PTHR10814">
    <property type="entry name" value="TRANSDUCIN-LIKE ENHANCER PROTEIN"/>
    <property type="match status" value="1"/>
</dbReference>
<dbReference type="PANTHER" id="PTHR10814:SF31">
    <property type="entry name" value="TRANSDUCIN-LIKE ENHANCER PROTEIN 4"/>
    <property type="match status" value="1"/>
</dbReference>
<dbReference type="Pfam" id="PF03920">
    <property type="entry name" value="TLE_N"/>
    <property type="match status" value="1"/>
</dbReference>
<organism>
    <name type="scientific">Xenopus laevis</name>
    <name type="common">African clawed frog</name>
    <dbReference type="NCBI Taxonomy" id="8355"/>
    <lineage>
        <taxon>Eukaryota</taxon>
        <taxon>Metazoa</taxon>
        <taxon>Chordata</taxon>
        <taxon>Craniata</taxon>
        <taxon>Vertebrata</taxon>
        <taxon>Euteleostomi</taxon>
        <taxon>Amphibia</taxon>
        <taxon>Batrachia</taxon>
        <taxon>Anura</taxon>
        <taxon>Pipoidea</taxon>
        <taxon>Pipidae</taxon>
        <taxon>Xenopodinae</taxon>
        <taxon>Xenopus</taxon>
        <taxon>Xenopus</taxon>
    </lineage>
</organism>
<accession>O42470</accession>
<proteinExistence type="evidence at transcript level"/>
<name>AES_XENLA</name>
<sequence>MMFPQSSSRHSGSSHMPQQLKFTTSDSCDRIKDEFQLLQAQYHSLKLECDKLAGEKSEMQRHYVMYYEMSYGLNIEMHKQAEIVKRLHGICAQVLPYLSQEHQQQVLGAIERAKQVTAPELNSIIRQLQVHQLSQLQALALPLTSLPMGLQAPSLPISASSGLLSLSALGSQGHLPKEDKNGHEGDRRPDDDGDKSD</sequence>
<evidence type="ECO:0000250" key="1"/>
<evidence type="ECO:0000256" key="2">
    <source>
        <dbReference type="SAM" id="MobiDB-lite"/>
    </source>
</evidence>
<evidence type="ECO:0000305" key="3"/>
<reference key="1">
    <citation type="journal article" date="1997" name="Gene">
        <title>Cloning and developmental expression of Xenopus cDNAs encoding the Enhancer of split groucho and related proteins.</title>
        <authorList>
            <person name="Choudhury B.K."/>
            <person name="Kim J."/>
            <person name="Kung H.-F."/>
            <person name="Li S.S.-L."/>
        </authorList>
    </citation>
    <scope>NUCLEOTIDE SEQUENCE [MRNA]</scope>
    <source>
        <tissue>Ovary</tissue>
    </source>
</reference>
<keyword id="KW-0539">Nucleus</keyword>
<keyword id="KW-1185">Reference proteome</keyword>
<keyword id="KW-0678">Repressor</keyword>
<keyword id="KW-0804">Transcription</keyword>
<keyword id="KW-0805">Transcription regulation</keyword>
<keyword id="KW-0832">Ubl conjugation</keyword>